<protein>
    <recommendedName>
        <fullName evidence="1">Ribosomal RNA small subunit methyltransferase G</fullName>
        <ecNumber evidence="1">2.1.1.-</ecNumber>
    </recommendedName>
    <alternativeName>
        <fullName evidence="1">16S rRNA 7-methylguanosine methyltransferase</fullName>
        <shortName evidence="1">16S rRNA m7G methyltransferase</shortName>
    </alternativeName>
</protein>
<feature type="chain" id="PRO_0000342930" description="Ribosomal RNA small subunit methyltransferase G">
    <location>
        <begin position="1"/>
        <end position="202"/>
    </location>
</feature>
<feature type="binding site" evidence="1">
    <location>
        <position position="75"/>
    </location>
    <ligand>
        <name>S-adenosyl-L-methionine</name>
        <dbReference type="ChEBI" id="CHEBI:59789"/>
    </ligand>
</feature>
<feature type="binding site" evidence="1">
    <location>
        <position position="80"/>
    </location>
    <ligand>
        <name>S-adenosyl-L-methionine</name>
        <dbReference type="ChEBI" id="CHEBI:59789"/>
    </ligand>
</feature>
<feature type="binding site" evidence="1">
    <location>
        <begin position="125"/>
        <end position="126"/>
    </location>
    <ligand>
        <name>S-adenosyl-L-methionine</name>
        <dbReference type="ChEBI" id="CHEBI:59789"/>
    </ligand>
</feature>
<feature type="binding site" evidence="1">
    <location>
        <position position="139"/>
    </location>
    <ligand>
        <name>S-adenosyl-L-methionine</name>
        <dbReference type="ChEBI" id="CHEBI:59789"/>
    </ligand>
</feature>
<keyword id="KW-0963">Cytoplasm</keyword>
<keyword id="KW-0489">Methyltransferase</keyword>
<keyword id="KW-0698">rRNA processing</keyword>
<keyword id="KW-0949">S-adenosyl-L-methionine</keyword>
<keyword id="KW-0808">Transferase</keyword>
<organism>
    <name type="scientific">Mesomycoplasma hyopneumoniae (strain J / ATCC 25934 / NCTC 10110)</name>
    <name type="common">Mycoplasma hyopneumoniae</name>
    <dbReference type="NCBI Taxonomy" id="262719"/>
    <lineage>
        <taxon>Bacteria</taxon>
        <taxon>Bacillati</taxon>
        <taxon>Mycoplasmatota</taxon>
        <taxon>Mycoplasmoidales</taxon>
        <taxon>Metamycoplasmataceae</taxon>
        <taxon>Mesomycoplasma</taxon>
    </lineage>
</organism>
<name>RSMG_MESHJ</name>
<proteinExistence type="inferred from homology"/>
<comment type="function">
    <text evidence="1">Specifically methylates the N7 position of a guanine in 16S rRNA.</text>
</comment>
<comment type="subcellular location">
    <subcellularLocation>
        <location evidence="1">Cytoplasm</location>
    </subcellularLocation>
</comment>
<comment type="similarity">
    <text evidence="1">Belongs to the methyltransferase superfamily. RNA methyltransferase RsmG family.</text>
</comment>
<reference key="1">
    <citation type="journal article" date="2005" name="J. Bacteriol.">
        <title>Swine and poultry pathogens: the complete genome sequences of two strains of Mycoplasma hyopneumoniae and a strain of Mycoplasma synoviae.</title>
        <authorList>
            <person name="Vasconcelos A.T.R."/>
            <person name="Ferreira H.B."/>
            <person name="Bizarro C.V."/>
            <person name="Bonatto S.L."/>
            <person name="Carvalho M.O."/>
            <person name="Pinto P.M."/>
            <person name="Almeida D.F."/>
            <person name="Almeida L.G.P."/>
            <person name="Almeida R."/>
            <person name="Alves-Junior L."/>
            <person name="Assuncao E.N."/>
            <person name="Azevedo V.A.C."/>
            <person name="Bogo M.R."/>
            <person name="Brigido M.M."/>
            <person name="Brocchi M."/>
            <person name="Burity H.A."/>
            <person name="Camargo A.A."/>
            <person name="Camargo S.S."/>
            <person name="Carepo M.S."/>
            <person name="Carraro D.M."/>
            <person name="de Mattos Cascardo J.C."/>
            <person name="Castro L.A."/>
            <person name="Cavalcanti G."/>
            <person name="Chemale G."/>
            <person name="Collevatti R.G."/>
            <person name="Cunha C.W."/>
            <person name="Dallagiovanna B."/>
            <person name="Dambros B.P."/>
            <person name="Dellagostin O.A."/>
            <person name="Falcao C."/>
            <person name="Fantinatti-Garboggini F."/>
            <person name="Felipe M.S.S."/>
            <person name="Fiorentin L."/>
            <person name="Franco G.R."/>
            <person name="Freitas N.S.A."/>
            <person name="Frias D."/>
            <person name="Grangeiro T.B."/>
            <person name="Grisard E.C."/>
            <person name="Guimaraes C.T."/>
            <person name="Hungria M."/>
            <person name="Jardim S.N."/>
            <person name="Krieger M.A."/>
            <person name="Laurino J.P."/>
            <person name="Lima L.F.A."/>
            <person name="Lopes M.I."/>
            <person name="Loreto E.L.S."/>
            <person name="Madeira H.M.F."/>
            <person name="Manfio G.P."/>
            <person name="Maranhao A.Q."/>
            <person name="Martinkovics C.T."/>
            <person name="Medeiros S.R.B."/>
            <person name="Moreira M.A.M."/>
            <person name="Neiva M."/>
            <person name="Ramalho-Neto C.E."/>
            <person name="Nicolas M.F."/>
            <person name="Oliveira S.C."/>
            <person name="Paixao R.F.C."/>
            <person name="Pedrosa F.O."/>
            <person name="Pena S.D.J."/>
            <person name="Pereira M."/>
            <person name="Pereira-Ferrari L."/>
            <person name="Piffer I."/>
            <person name="Pinto L.S."/>
            <person name="Potrich D.P."/>
            <person name="Salim A.C.M."/>
            <person name="Santos F.R."/>
            <person name="Schmitt R."/>
            <person name="Schneider M.P.C."/>
            <person name="Schrank A."/>
            <person name="Schrank I.S."/>
            <person name="Schuck A.F."/>
            <person name="Seuanez H.N."/>
            <person name="Silva D.W."/>
            <person name="Silva R."/>
            <person name="Silva S.C."/>
            <person name="Soares C.M.A."/>
            <person name="Souza K.R.L."/>
            <person name="Souza R.C."/>
            <person name="Staats C.C."/>
            <person name="Steffens M.B.R."/>
            <person name="Teixeira S.M.R."/>
            <person name="Urmenyi T.P."/>
            <person name="Vainstein M.H."/>
            <person name="Zuccherato L.W."/>
            <person name="Simpson A.J.G."/>
            <person name="Zaha A."/>
        </authorList>
    </citation>
    <scope>NUCLEOTIDE SEQUENCE [LARGE SCALE GENOMIC DNA]</scope>
    <source>
        <strain>J / ATCC 25934 / NCTC 10110</strain>
    </source>
</reference>
<sequence>MYKRLVQEFFPKLDFENLEKYVNLIEFSNKNFNLTAFSGDILWKEGIFESIFTMNFIVGLVNNKENKKLKILDIGAGSGFPSIPFLITNPEIELTISESMQKRCQFLKDVSEKLDLKFNLICKPVQEINPQKFDIITARAVANLEKLEKITKKIHFPKTLLAFIKGPKVFNEVQNCKNCNYKIIKVNNNINKKIFIAFKQVS</sequence>
<gene>
    <name evidence="1" type="primary">rsmG</name>
    <name type="ordered locus">MHJ_0655</name>
</gene>
<evidence type="ECO:0000255" key="1">
    <source>
        <dbReference type="HAMAP-Rule" id="MF_00074"/>
    </source>
</evidence>
<dbReference type="EC" id="2.1.1.-" evidence="1"/>
<dbReference type="EMBL" id="AE017243">
    <property type="protein sequence ID" value="AAZ44738.1"/>
    <property type="molecule type" value="Genomic_DNA"/>
</dbReference>
<dbReference type="RefSeq" id="WP_011284377.1">
    <property type="nucleotide sequence ID" value="NC_007295.1"/>
</dbReference>
<dbReference type="SMR" id="Q4A933"/>
<dbReference type="GeneID" id="41334958"/>
<dbReference type="KEGG" id="mhj:MHJ_0655"/>
<dbReference type="eggNOG" id="COG0357">
    <property type="taxonomic scope" value="Bacteria"/>
</dbReference>
<dbReference type="HOGENOM" id="CLU_065341_2_1_14"/>
<dbReference type="OrthoDB" id="9808773at2"/>
<dbReference type="Proteomes" id="UP000000548">
    <property type="component" value="Chromosome"/>
</dbReference>
<dbReference type="GO" id="GO:0005829">
    <property type="term" value="C:cytosol"/>
    <property type="evidence" value="ECO:0007669"/>
    <property type="project" value="TreeGrafter"/>
</dbReference>
<dbReference type="GO" id="GO:0070043">
    <property type="term" value="F:rRNA (guanine-N7-)-methyltransferase activity"/>
    <property type="evidence" value="ECO:0007669"/>
    <property type="project" value="UniProtKB-UniRule"/>
</dbReference>
<dbReference type="Gene3D" id="3.40.50.150">
    <property type="entry name" value="Vaccinia Virus protein VP39"/>
    <property type="match status" value="1"/>
</dbReference>
<dbReference type="HAMAP" id="MF_00074">
    <property type="entry name" value="16SrRNA_methyltr_G"/>
    <property type="match status" value="1"/>
</dbReference>
<dbReference type="InterPro" id="IPR003682">
    <property type="entry name" value="rRNA_ssu_MeTfrase_G"/>
</dbReference>
<dbReference type="InterPro" id="IPR029063">
    <property type="entry name" value="SAM-dependent_MTases_sf"/>
</dbReference>
<dbReference type="NCBIfam" id="TIGR00138">
    <property type="entry name" value="rsmG_gidB"/>
    <property type="match status" value="1"/>
</dbReference>
<dbReference type="PANTHER" id="PTHR31760">
    <property type="entry name" value="S-ADENOSYL-L-METHIONINE-DEPENDENT METHYLTRANSFERASES SUPERFAMILY PROTEIN"/>
    <property type="match status" value="1"/>
</dbReference>
<dbReference type="PANTHER" id="PTHR31760:SF0">
    <property type="entry name" value="S-ADENOSYL-L-METHIONINE-DEPENDENT METHYLTRANSFERASES SUPERFAMILY PROTEIN"/>
    <property type="match status" value="1"/>
</dbReference>
<dbReference type="Pfam" id="PF02527">
    <property type="entry name" value="GidB"/>
    <property type="match status" value="1"/>
</dbReference>
<dbReference type="PIRSF" id="PIRSF003078">
    <property type="entry name" value="GidB"/>
    <property type="match status" value="1"/>
</dbReference>
<dbReference type="SUPFAM" id="SSF53335">
    <property type="entry name" value="S-adenosyl-L-methionine-dependent methyltransferases"/>
    <property type="match status" value="1"/>
</dbReference>
<accession>Q4A933</accession>